<comment type="function">
    <text evidence="1">Catalyzes the reversible epimerization of D-ribulose 5-phosphate to D-xylulose 5-phosphate.</text>
</comment>
<comment type="catalytic activity">
    <reaction evidence="1">
        <text>D-ribulose 5-phosphate = D-xylulose 5-phosphate</text>
        <dbReference type="Rhea" id="RHEA:13677"/>
        <dbReference type="ChEBI" id="CHEBI:57737"/>
        <dbReference type="ChEBI" id="CHEBI:58121"/>
        <dbReference type="EC" id="5.1.3.1"/>
    </reaction>
</comment>
<comment type="cofactor">
    <cofactor evidence="1">
        <name>a divalent metal cation</name>
        <dbReference type="ChEBI" id="CHEBI:60240"/>
    </cofactor>
    <text evidence="1">Binds 1 divalent metal cation per subunit.</text>
</comment>
<comment type="pathway">
    <text evidence="1">Carbohydrate degradation.</text>
</comment>
<comment type="similarity">
    <text evidence="1">Belongs to the ribulose-phosphate 3-epimerase family.</text>
</comment>
<keyword id="KW-0119">Carbohydrate metabolism</keyword>
<keyword id="KW-0413">Isomerase</keyword>
<keyword id="KW-0479">Metal-binding</keyword>
<keyword id="KW-1185">Reference proteome</keyword>
<name>RPE_MYCTO</name>
<feature type="chain" id="PRO_0000428068" description="Ribulose-phosphate 3-epimerase">
    <location>
        <begin position="1"/>
        <end position="229"/>
    </location>
</feature>
<feature type="active site" description="Proton acceptor" evidence="1">
    <location>
        <position position="38"/>
    </location>
</feature>
<feature type="active site" description="Proton donor" evidence="1">
    <location>
        <position position="178"/>
    </location>
</feature>
<feature type="binding site" evidence="1">
    <location>
        <position position="13"/>
    </location>
    <ligand>
        <name>substrate</name>
    </ligand>
</feature>
<feature type="binding site" evidence="1">
    <location>
        <position position="36"/>
    </location>
    <ligand>
        <name>a divalent metal cation</name>
        <dbReference type="ChEBI" id="CHEBI:60240"/>
    </ligand>
</feature>
<feature type="binding site" evidence="1">
    <location>
        <position position="38"/>
    </location>
    <ligand>
        <name>a divalent metal cation</name>
        <dbReference type="ChEBI" id="CHEBI:60240"/>
    </ligand>
</feature>
<feature type="binding site" evidence="1">
    <location>
        <position position="69"/>
    </location>
    <ligand>
        <name>a divalent metal cation</name>
        <dbReference type="ChEBI" id="CHEBI:60240"/>
    </ligand>
</feature>
<feature type="binding site" evidence="1">
    <location>
        <position position="69"/>
    </location>
    <ligand>
        <name>substrate</name>
    </ligand>
</feature>
<feature type="binding site" evidence="1">
    <location>
        <begin position="145"/>
        <end position="148"/>
    </location>
    <ligand>
        <name>substrate</name>
    </ligand>
</feature>
<feature type="binding site" evidence="1">
    <location>
        <begin position="178"/>
        <end position="180"/>
    </location>
    <ligand>
        <name>substrate</name>
    </ligand>
</feature>
<feature type="binding site" evidence="1">
    <location>
        <position position="178"/>
    </location>
    <ligand>
        <name>a divalent metal cation</name>
        <dbReference type="ChEBI" id="CHEBI:60240"/>
    </ligand>
</feature>
<feature type="binding site" evidence="1">
    <location>
        <begin position="200"/>
        <end position="201"/>
    </location>
    <ligand>
        <name>substrate</name>
    </ligand>
</feature>
<accession>P9WI50</accession>
<accession>L0T6S4</accession>
<accession>P65760</accession>
<accession>P71676</accession>
<evidence type="ECO:0000255" key="1">
    <source>
        <dbReference type="HAMAP-Rule" id="MF_02227"/>
    </source>
</evidence>
<sequence length="229" mass="23774">MAGSTGGPLIAPSILAADFARLADEAAAVNGADWLHVDVMDGHFVPNLTIGLPVVESLLAVTDIPMDCHLMIDNPDRWAPPYAEAGAYNVTFHAEATDNPVGVARDIRAAGAKAGISVKPGTPLEPYLDILPHFDTLLVMSVEPGFGGQRFIPEVLSKVRAVRKMVDAGELTILVEIDGGINDDTIEQAAEAGVDCFVAGSAVYGADDPAAAVAALRRQAGAASLHLSL</sequence>
<organism>
    <name type="scientific">Mycobacterium tuberculosis (strain CDC 1551 / Oshkosh)</name>
    <dbReference type="NCBI Taxonomy" id="83331"/>
    <lineage>
        <taxon>Bacteria</taxon>
        <taxon>Bacillati</taxon>
        <taxon>Actinomycetota</taxon>
        <taxon>Actinomycetes</taxon>
        <taxon>Mycobacteriales</taxon>
        <taxon>Mycobacteriaceae</taxon>
        <taxon>Mycobacterium</taxon>
        <taxon>Mycobacterium tuberculosis complex</taxon>
    </lineage>
</organism>
<gene>
    <name evidence="1" type="primary">rpe</name>
    <name type="ordered locus">MT1452</name>
</gene>
<reference key="1">
    <citation type="journal article" date="2002" name="J. Bacteriol.">
        <title>Whole-genome comparison of Mycobacterium tuberculosis clinical and laboratory strains.</title>
        <authorList>
            <person name="Fleischmann R.D."/>
            <person name="Alland D."/>
            <person name="Eisen J.A."/>
            <person name="Carpenter L."/>
            <person name="White O."/>
            <person name="Peterson J.D."/>
            <person name="DeBoy R.T."/>
            <person name="Dodson R.J."/>
            <person name="Gwinn M.L."/>
            <person name="Haft D.H."/>
            <person name="Hickey E.K."/>
            <person name="Kolonay J.F."/>
            <person name="Nelson W.C."/>
            <person name="Umayam L.A."/>
            <person name="Ermolaeva M.D."/>
            <person name="Salzberg S.L."/>
            <person name="Delcher A."/>
            <person name="Utterback T.R."/>
            <person name="Weidman J.F."/>
            <person name="Khouri H.M."/>
            <person name="Gill J."/>
            <person name="Mikula A."/>
            <person name="Bishai W."/>
            <person name="Jacobs W.R. Jr."/>
            <person name="Venter J.C."/>
            <person name="Fraser C.M."/>
        </authorList>
    </citation>
    <scope>NUCLEOTIDE SEQUENCE [LARGE SCALE GENOMIC DNA]</scope>
    <source>
        <strain>CDC 1551 / Oshkosh</strain>
    </source>
</reference>
<protein>
    <recommendedName>
        <fullName evidence="1">Ribulose-phosphate 3-epimerase</fullName>
        <ecNumber evidence="1">5.1.3.1</ecNumber>
    </recommendedName>
</protein>
<proteinExistence type="inferred from homology"/>
<dbReference type="EC" id="5.1.3.1" evidence="1"/>
<dbReference type="EMBL" id="AE000516">
    <property type="protein sequence ID" value="AAK45717.1"/>
    <property type="molecule type" value="Genomic_DNA"/>
</dbReference>
<dbReference type="PIR" id="E70901">
    <property type="entry name" value="E70901"/>
</dbReference>
<dbReference type="SMR" id="P9WI50"/>
<dbReference type="KEGG" id="mtc:MT1452"/>
<dbReference type="HOGENOM" id="CLU_054856_2_0_11"/>
<dbReference type="Proteomes" id="UP000001020">
    <property type="component" value="Chromosome"/>
</dbReference>
<dbReference type="GO" id="GO:0004750">
    <property type="term" value="F:D-ribulose-phosphate 3-epimerase activity"/>
    <property type="evidence" value="ECO:0007669"/>
    <property type="project" value="UniProtKB-UniRule"/>
</dbReference>
<dbReference type="GO" id="GO:0046872">
    <property type="term" value="F:metal ion binding"/>
    <property type="evidence" value="ECO:0007669"/>
    <property type="project" value="UniProtKB-UniRule"/>
</dbReference>
<dbReference type="GO" id="GO:0019323">
    <property type="term" value="P:pentose catabolic process"/>
    <property type="evidence" value="ECO:0007669"/>
    <property type="project" value="UniProtKB-UniRule"/>
</dbReference>
<dbReference type="GO" id="GO:0006098">
    <property type="term" value="P:pentose-phosphate shunt"/>
    <property type="evidence" value="ECO:0007669"/>
    <property type="project" value="InterPro"/>
</dbReference>
<dbReference type="CDD" id="cd00429">
    <property type="entry name" value="RPE"/>
    <property type="match status" value="1"/>
</dbReference>
<dbReference type="FunFam" id="3.20.20.70:FF:000004">
    <property type="entry name" value="Ribulose-phosphate 3-epimerase"/>
    <property type="match status" value="1"/>
</dbReference>
<dbReference type="Gene3D" id="3.20.20.70">
    <property type="entry name" value="Aldolase class I"/>
    <property type="match status" value="1"/>
</dbReference>
<dbReference type="HAMAP" id="MF_02227">
    <property type="entry name" value="RPE"/>
    <property type="match status" value="1"/>
</dbReference>
<dbReference type="InterPro" id="IPR013785">
    <property type="entry name" value="Aldolase_TIM"/>
</dbReference>
<dbReference type="InterPro" id="IPR026019">
    <property type="entry name" value="Ribul_P_3_epim"/>
</dbReference>
<dbReference type="InterPro" id="IPR000056">
    <property type="entry name" value="Ribul_P_3_epim-like"/>
</dbReference>
<dbReference type="InterPro" id="IPR011060">
    <property type="entry name" value="RibuloseP-bd_barrel"/>
</dbReference>
<dbReference type="NCBIfam" id="NF004076">
    <property type="entry name" value="PRK05581.1-4"/>
    <property type="match status" value="1"/>
</dbReference>
<dbReference type="NCBIfam" id="TIGR01163">
    <property type="entry name" value="rpe"/>
    <property type="match status" value="1"/>
</dbReference>
<dbReference type="PANTHER" id="PTHR11749">
    <property type="entry name" value="RIBULOSE-5-PHOSPHATE-3-EPIMERASE"/>
    <property type="match status" value="1"/>
</dbReference>
<dbReference type="Pfam" id="PF00834">
    <property type="entry name" value="Ribul_P_3_epim"/>
    <property type="match status" value="1"/>
</dbReference>
<dbReference type="PIRSF" id="PIRSF001461">
    <property type="entry name" value="RPE"/>
    <property type="match status" value="1"/>
</dbReference>
<dbReference type="SUPFAM" id="SSF51366">
    <property type="entry name" value="Ribulose-phoshate binding barrel"/>
    <property type="match status" value="1"/>
</dbReference>
<dbReference type="PROSITE" id="PS01085">
    <property type="entry name" value="RIBUL_P_3_EPIMER_1"/>
    <property type="match status" value="1"/>
</dbReference>
<dbReference type="PROSITE" id="PS01086">
    <property type="entry name" value="RIBUL_P_3_EPIMER_2"/>
    <property type="match status" value="1"/>
</dbReference>